<protein>
    <recommendedName>
        <fullName evidence="1">Anthranilate phosphoribosyltransferase</fullName>
        <ecNumber evidence="1">2.4.2.18</ecNumber>
    </recommendedName>
</protein>
<sequence>MNELLKSCVNGRTLNEIEAHSIMRDMMTGSLSAAEIGGLLSVLAYRGETAEEITGFVRAMREQAHTIDGPEHVVDTCGTGGDGSSTFNISTAAAIIASSAGAKIAKHGNRSVSSKSGSADVLEYLGVSIQTSPEETIKSIERRNMGFLYAPSYHSSMKHVAGARKDLAFRTVFNLLGPLSNPMKAKRQVIGVYSIEKAKLMARALEAFEPEHVLFVSSRDGLDELSITSPTDVIELKGGKTYEYTVEPGDVGLPLGRLRDIQVATPEESGRLIVDILKNRGPDSAVHIAAFNAGAALYVAEQAADLKEGVALALEAVAGGEALNQLERLKQKEEELYA</sequence>
<evidence type="ECO:0000255" key="1">
    <source>
        <dbReference type="HAMAP-Rule" id="MF_00211"/>
    </source>
</evidence>
<proteinExistence type="inferred from homology"/>
<comment type="function">
    <text evidence="1">Catalyzes the transfer of the phosphoribosyl group of 5-phosphorylribose-1-pyrophosphate (PRPP) to anthranilate to yield N-(5'-phosphoribosyl)-anthranilate (PRA).</text>
</comment>
<comment type="catalytic activity">
    <reaction evidence="1">
        <text>N-(5-phospho-beta-D-ribosyl)anthranilate + diphosphate = 5-phospho-alpha-D-ribose 1-diphosphate + anthranilate</text>
        <dbReference type="Rhea" id="RHEA:11768"/>
        <dbReference type="ChEBI" id="CHEBI:16567"/>
        <dbReference type="ChEBI" id="CHEBI:18277"/>
        <dbReference type="ChEBI" id="CHEBI:33019"/>
        <dbReference type="ChEBI" id="CHEBI:58017"/>
        <dbReference type="EC" id="2.4.2.18"/>
    </reaction>
</comment>
<comment type="cofactor">
    <cofactor evidence="1">
        <name>Mg(2+)</name>
        <dbReference type="ChEBI" id="CHEBI:18420"/>
    </cofactor>
    <text evidence="1">Binds 2 magnesium ions per monomer.</text>
</comment>
<comment type="pathway">
    <text evidence="1">Amino-acid biosynthesis; L-tryptophan biosynthesis; L-tryptophan from chorismate: step 2/5.</text>
</comment>
<comment type="subunit">
    <text evidence="1">Homodimer.</text>
</comment>
<comment type="similarity">
    <text evidence="1">Belongs to the anthranilate phosphoribosyltransferase family.</text>
</comment>
<feature type="chain" id="PRO_0000227134" description="Anthranilate phosphoribosyltransferase">
    <location>
        <begin position="1"/>
        <end position="338"/>
    </location>
</feature>
<feature type="binding site" evidence="1">
    <location>
        <position position="78"/>
    </location>
    <ligand>
        <name>5-phospho-alpha-D-ribose 1-diphosphate</name>
        <dbReference type="ChEBI" id="CHEBI:58017"/>
    </ligand>
</feature>
<feature type="binding site" evidence="1">
    <location>
        <position position="78"/>
    </location>
    <ligand>
        <name>anthranilate</name>
        <dbReference type="ChEBI" id="CHEBI:16567"/>
        <label>1</label>
    </ligand>
</feature>
<feature type="binding site" evidence="1">
    <location>
        <begin position="81"/>
        <end position="82"/>
    </location>
    <ligand>
        <name>5-phospho-alpha-D-ribose 1-diphosphate</name>
        <dbReference type="ChEBI" id="CHEBI:58017"/>
    </ligand>
</feature>
<feature type="binding site" evidence="1">
    <location>
        <position position="86"/>
    </location>
    <ligand>
        <name>5-phospho-alpha-D-ribose 1-diphosphate</name>
        <dbReference type="ChEBI" id="CHEBI:58017"/>
    </ligand>
</feature>
<feature type="binding site" evidence="1">
    <location>
        <begin position="88"/>
        <end position="91"/>
    </location>
    <ligand>
        <name>5-phospho-alpha-D-ribose 1-diphosphate</name>
        <dbReference type="ChEBI" id="CHEBI:58017"/>
    </ligand>
</feature>
<feature type="binding site" evidence="1">
    <location>
        <position position="90"/>
    </location>
    <ligand>
        <name>Mg(2+)</name>
        <dbReference type="ChEBI" id="CHEBI:18420"/>
        <label>1</label>
    </ligand>
</feature>
<feature type="binding site" evidence="1">
    <location>
        <begin position="106"/>
        <end position="114"/>
    </location>
    <ligand>
        <name>5-phospho-alpha-D-ribose 1-diphosphate</name>
        <dbReference type="ChEBI" id="CHEBI:58017"/>
    </ligand>
</feature>
<feature type="binding site" evidence="1">
    <location>
        <position position="109"/>
    </location>
    <ligand>
        <name>anthranilate</name>
        <dbReference type="ChEBI" id="CHEBI:16567"/>
        <label>1</label>
    </ligand>
</feature>
<feature type="binding site" evidence="1">
    <location>
        <position position="118"/>
    </location>
    <ligand>
        <name>5-phospho-alpha-D-ribose 1-diphosphate</name>
        <dbReference type="ChEBI" id="CHEBI:58017"/>
    </ligand>
</feature>
<feature type="binding site" evidence="1">
    <location>
        <position position="164"/>
    </location>
    <ligand>
        <name>anthranilate</name>
        <dbReference type="ChEBI" id="CHEBI:16567"/>
        <label>2</label>
    </ligand>
</feature>
<feature type="binding site" evidence="1">
    <location>
        <position position="223"/>
    </location>
    <ligand>
        <name>Mg(2+)</name>
        <dbReference type="ChEBI" id="CHEBI:18420"/>
        <label>2</label>
    </ligand>
</feature>
<feature type="binding site" evidence="1">
    <location>
        <position position="224"/>
    </location>
    <ligand>
        <name>Mg(2+)</name>
        <dbReference type="ChEBI" id="CHEBI:18420"/>
        <label>1</label>
    </ligand>
</feature>
<feature type="binding site" evidence="1">
    <location>
        <position position="224"/>
    </location>
    <ligand>
        <name>Mg(2+)</name>
        <dbReference type="ChEBI" id="CHEBI:18420"/>
        <label>2</label>
    </ligand>
</feature>
<dbReference type="EC" id="2.4.2.18" evidence="1"/>
<dbReference type="EMBL" id="AE017333">
    <property type="protein sequence ID" value="AAU41282.1"/>
    <property type="molecule type" value="Genomic_DNA"/>
</dbReference>
<dbReference type="EMBL" id="CP000002">
    <property type="protein sequence ID" value="AAU23928.1"/>
    <property type="molecule type" value="Genomic_DNA"/>
</dbReference>
<dbReference type="RefSeq" id="WP_003182981.1">
    <property type="nucleotide sequence ID" value="NC_006322.1"/>
</dbReference>
<dbReference type="SMR" id="Q65I32"/>
<dbReference type="STRING" id="279010.BL02774"/>
<dbReference type="GeneID" id="92860998"/>
<dbReference type="KEGG" id="bld:BLi02402"/>
<dbReference type="KEGG" id="bli:BL02774"/>
<dbReference type="eggNOG" id="COG0547">
    <property type="taxonomic scope" value="Bacteria"/>
</dbReference>
<dbReference type="HOGENOM" id="CLU_034315_2_1_9"/>
<dbReference type="UniPathway" id="UPA00035">
    <property type="reaction ID" value="UER00041"/>
</dbReference>
<dbReference type="Proteomes" id="UP000000606">
    <property type="component" value="Chromosome"/>
</dbReference>
<dbReference type="Bgee" id="BL02774">
    <property type="expression patterns" value="Expressed in primary dorsal nerve cord and 1 other cell type or tissue"/>
</dbReference>
<dbReference type="GO" id="GO:0005829">
    <property type="term" value="C:cytosol"/>
    <property type="evidence" value="ECO:0007669"/>
    <property type="project" value="TreeGrafter"/>
</dbReference>
<dbReference type="GO" id="GO:0004048">
    <property type="term" value="F:anthranilate phosphoribosyltransferase activity"/>
    <property type="evidence" value="ECO:0007669"/>
    <property type="project" value="UniProtKB-UniRule"/>
</dbReference>
<dbReference type="GO" id="GO:0000287">
    <property type="term" value="F:magnesium ion binding"/>
    <property type="evidence" value="ECO:0007669"/>
    <property type="project" value="UniProtKB-UniRule"/>
</dbReference>
<dbReference type="GO" id="GO:0000162">
    <property type="term" value="P:L-tryptophan biosynthetic process"/>
    <property type="evidence" value="ECO:0007669"/>
    <property type="project" value="UniProtKB-UniRule"/>
</dbReference>
<dbReference type="FunFam" id="3.40.1030.10:FF:000002">
    <property type="entry name" value="Anthranilate phosphoribosyltransferase"/>
    <property type="match status" value="1"/>
</dbReference>
<dbReference type="Gene3D" id="3.40.1030.10">
    <property type="entry name" value="Nucleoside phosphorylase/phosphoribosyltransferase catalytic domain"/>
    <property type="match status" value="1"/>
</dbReference>
<dbReference type="Gene3D" id="1.20.970.10">
    <property type="entry name" value="Transferase, Pyrimidine Nucleoside Phosphorylase, Chain C"/>
    <property type="match status" value="1"/>
</dbReference>
<dbReference type="HAMAP" id="MF_00211">
    <property type="entry name" value="TrpD"/>
    <property type="match status" value="1"/>
</dbReference>
<dbReference type="InterPro" id="IPR005940">
    <property type="entry name" value="Anthranilate_Pribosyl_Tfrase"/>
</dbReference>
<dbReference type="InterPro" id="IPR000312">
    <property type="entry name" value="Glycosyl_Trfase_fam3"/>
</dbReference>
<dbReference type="InterPro" id="IPR017459">
    <property type="entry name" value="Glycosyl_Trfase_fam3_N_dom"/>
</dbReference>
<dbReference type="InterPro" id="IPR036320">
    <property type="entry name" value="Glycosyl_Trfase_fam3_N_dom_sf"/>
</dbReference>
<dbReference type="InterPro" id="IPR035902">
    <property type="entry name" value="Nuc_phospho_transferase"/>
</dbReference>
<dbReference type="NCBIfam" id="TIGR01245">
    <property type="entry name" value="trpD"/>
    <property type="match status" value="1"/>
</dbReference>
<dbReference type="PANTHER" id="PTHR43285">
    <property type="entry name" value="ANTHRANILATE PHOSPHORIBOSYLTRANSFERASE"/>
    <property type="match status" value="1"/>
</dbReference>
<dbReference type="PANTHER" id="PTHR43285:SF2">
    <property type="entry name" value="ANTHRANILATE PHOSPHORIBOSYLTRANSFERASE"/>
    <property type="match status" value="1"/>
</dbReference>
<dbReference type="Pfam" id="PF02885">
    <property type="entry name" value="Glycos_trans_3N"/>
    <property type="match status" value="1"/>
</dbReference>
<dbReference type="Pfam" id="PF00591">
    <property type="entry name" value="Glycos_transf_3"/>
    <property type="match status" value="1"/>
</dbReference>
<dbReference type="SUPFAM" id="SSF52418">
    <property type="entry name" value="Nucleoside phosphorylase/phosphoribosyltransferase catalytic domain"/>
    <property type="match status" value="1"/>
</dbReference>
<dbReference type="SUPFAM" id="SSF47648">
    <property type="entry name" value="Nucleoside phosphorylase/phosphoribosyltransferase N-terminal domain"/>
    <property type="match status" value="1"/>
</dbReference>
<name>TRPD_BACLD</name>
<accession>Q65I32</accession>
<accession>Q62TI1</accession>
<reference key="1">
    <citation type="journal article" date="2004" name="J. Mol. Microbiol. Biotechnol.">
        <title>The complete genome sequence of Bacillus licheniformis DSM13, an organism with great industrial potential.</title>
        <authorList>
            <person name="Veith B."/>
            <person name="Herzberg C."/>
            <person name="Steckel S."/>
            <person name="Feesche J."/>
            <person name="Maurer K.H."/>
            <person name="Ehrenreich P."/>
            <person name="Baeumer S."/>
            <person name="Henne A."/>
            <person name="Liesegang H."/>
            <person name="Merkl R."/>
            <person name="Ehrenreich A."/>
            <person name="Gottschalk G."/>
        </authorList>
    </citation>
    <scope>NUCLEOTIDE SEQUENCE [LARGE SCALE GENOMIC DNA]</scope>
    <source>
        <strain>ATCC 14580 / DSM 13 / JCM 2505 / CCUG 7422 / NBRC 12200 / NCIMB 9375 / NCTC 10341 / NRRL NRS-1264 / Gibson 46</strain>
    </source>
</reference>
<reference key="2">
    <citation type="journal article" date="2004" name="Genome Biol.">
        <title>Complete genome sequence of the industrial bacterium Bacillus licheniformis and comparisons with closely related Bacillus species.</title>
        <authorList>
            <person name="Rey M.W."/>
            <person name="Ramaiya P."/>
            <person name="Nelson B.A."/>
            <person name="Brody-Karpin S.D."/>
            <person name="Zaretsky E.J."/>
            <person name="Tang M."/>
            <person name="Lopez de Leon A."/>
            <person name="Xiang H."/>
            <person name="Gusti V."/>
            <person name="Clausen I.G."/>
            <person name="Olsen P.B."/>
            <person name="Rasmussen M.D."/>
            <person name="Andersen J.T."/>
            <person name="Joergensen P.L."/>
            <person name="Larsen T.S."/>
            <person name="Sorokin A."/>
            <person name="Bolotin A."/>
            <person name="Lapidus A."/>
            <person name="Galleron N."/>
            <person name="Ehrlich S.D."/>
            <person name="Berka R.M."/>
        </authorList>
    </citation>
    <scope>NUCLEOTIDE SEQUENCE [LARGE SCALE GENOMIC DNA]</scope>
    <source>
        <strain>ATCC 14580 / DSM 13 / JCM 2505 / CCUG 7422 / NBRC 12200 / NCIMB 9375 / NCTC 10341 / NRRL NRS-1264 / Gibson 46</strain>
    </source>
</reference>
<gene>
    <name evidence="1" type="primary">trpD</name>
    <name type="ordered locus">BLi02402</name>
    <name type="ordered locus">BL02774</name>
</gene>
<keyword id="KW-0028">Amino-acid biosynthesis</keyword>
<keyword id="KW-0057">Aromatic amino acid biosynthesis</keyword>
<keyword id="KW-0328">Glycosyltransferase</keyword>
<keyword id="KW-0460">Magnesium</keyword>
<keyword id="KW-0479">Metal-binding</keyword>
<keyword id="KW-1185">Reference proteome</keyword>
<keyword id="KW-0808">Transferase</keyword>
<keyword id="KW-0822">Tryptophan biosynthesis</keyword>
<organism>
    <name type="scientific">Bacillus licheniformis (strain ATCC 14580 / DSM 13 / JCM 2505 / CCUG 7422 / NBRC 12200 / NCIMB 9375 / NCTC 10341 / NRRL NRS-1264 / Gibson 46)</name>
    <dbReference type="NCBI Taxonomy" id="279010"/>
    <lineage>
        <taxon>Bacteria</taxon>
        <taxon>Bacillati</taxon>
        <taxon>Bacillota</taxon>
        <taxon>Bacilli</taxon>
        <taxon>Bacillales</taxon>
        <taxon>Bacillaceae</taxon>
        <taxon>Bacillus</taxon>
    </lineage>
</organism>